<name>GTE1_ARATH</name>
<reference key="1">
    <citation type="journal article" date="2003" name="Plant J.">
        <title>IMB1, a bromodomain protein induced during seed imbibition, regulates ABA- and phyA-mediated responses of germination in Arabidopsis.</title>
        <authorList>
            <person name="Duque P."/>
            <person name="Chua N.-H."/>
        </authorList>
    </citation>
    <scope>NUCLEOTIDE SEQUENCE [MRNA]</scope>
    <scope>SUBCELLULAR LOCATION</scope>
    <scope>INDUCTION</scope>
    <scope>DEVELOPMENTAL STAGE</scope>
    <scope>DISRUPTION PHENOTYPE</scope>
    <scope>FUNCTION</scope>
    <scope>DOMAIN NET</scope>
    <scope>TISSUE SPECIFICITY</scope>
</reference>
<reference key="2">
    <citation type="journal article" date="1999" name="Nature">
        <title>Sequence and analysis of chromosome 2 of the plant Arabidopsis thaliana.</title>
        <authorList>
            <person name="Lin X."/>
            <person name="Kaul S."/>
            <person name="Rounsley S.D."/>
            <person name="Shea T.P."/>
            <person name="Benito M.-I."/>
            <person name="Town C.D."/>
            <person name="Fujii C.Y."/>
            <person name="Mason T.M."/>
            <person name="Bowman C.L."/>
            <person name="Barnstead M.E."/>
            <person name="Feldblyum T.V."/>
            <person name="Buell C.R."/>
            <person name="Ketchum K.A."/>
            <person name="Lee J.J."/>
            <person name="Ronning C.M."/>
            <person name="Koo H.L."/>
            <person name="Moffat K.S."/>
            <person name="Cronin L.A."/>
            <person name="Shen M."/>
            <person name="Pai G."/>
            <person name="Van Aken S."/>
            <person name="Umayam L."/>
            <person name="Tallon L.J."/>
            <person name="Gill J.E."/>
            <person name="Adams M.D."/>
            <person name="Carrera A.J."/>
            <person name="Creasy T.H."/>
            <person name="Goodman H.M."/>
            <person name="Somerville C.R."/>
            <person name="Copenhaver G.P."/>
            <person name="Preuss D."/>
            <person name="Nierman W.C."/>
            <person name="White O."/>
            <person name="Eisen J.A."/>
            <person name="Salzberg S.L."/>
            <person name="Fraser C.M."/>
            <person name="Venter J.C."/>
        </authorList>
    </citation>
    <scope>NUCLEOTIDE SEQUENCE [LARGE SCALE GENOMIC DNA]</scope>
    <source>
        <strain>cv. Columbia</strain>
    </source>
</reference>
<reference key="3">
    <citation type="journal article" date="2017" name="Plant J.">
        <title>Araport11: a complete reannotation of the Arabidopsis thaliana reference genome.</title>
        <authorList>
            <person name="Cheng C.Y."/>
            <person name="Krishnakumar V."/>
            <person name="Chan A.P."/>
            <person name="Thibaud-Nissen F."/>
            <person name="Schobel S."/>
            <person name="Town C.D."/>
        </authorList>
    </citation>
    <scope>GENOME REANNOTATION</scope>
    <source>
        <strain>cv. Columbia</strain>
    </source>
</reference>
<reference key="4">
    <citation type="submission" date="2006-07" db="EMBL/GenBank/DDBJ databases">
        <title>Large-scale analysis of RIKEN Arabidopsis full-length (RAFL) cDNAs.</title>
        <authorList>
            <person name="Totoki Y."/>
            <person name="Seki M."/>
            <person name="Ishida J."/>
            <person name="Nakajima M."/>
            <person name="Enju A."/>
            <person name="Kamiya A."/>
            <person name="Narusaka M."/>
            <person name="Shin-i T."/>
            <person name="Nakagawa M."/>
            <person name="Sakamoto N."/>
            <person name="Oishi K."/>
            <person name="Kohara Y."/>
            <person name="Kobayashi M."/>
            <person name="Toyoda A."/>
            <person name="Sakaki Y."/>
            <person name="Sakurai T."/>
            <person name="Iida K."/>
            <person name="Akiyama K."/>
            <person name="Satou M."/>
            <person name="Toyoda T."/>
            <person name="Konagaya A."/>
            <person name="Carninci P."/>
            <person name="Kawai J."/>
            <person name="Hayashizaki Y."/>
            <person name="Shinozaki K."/>
        </authorList>
    </citation>
    <scope>NUCLEOTIDE SEQUENCE [LARGE SCALE MRNA]</scope>
    <source>
        <strain>cv. Columbia</strain>
    </source>
</reference>
<reference key="5">
    <citation type="submission" date="2006-08" db="EMBL/GenBank/DDBJ databases">
        <title>Arabidopsis ORF Clones.</title>
        <authorList>
            <person name="Quinitio C."/>
            <person name="Chen H."/>
            <person name="Kim C.J."/>
            <person name="Shinn P."/>
            <person name="Ecker J.R."/>
        </authorList>
    </citation>
    <scope>NUCLEOTIDE SEQUENCE [LARGE SCALE MRNA]</scope>
    <source>
        <strain>cv. Columbia</strain>
    </source>
</reference>
<reference key="6">
    <citation type="journal article" date="2002" name="Nucleic Acids Res.">
        <title>Analysis of histone acetyltransferase and histone deacetylase families of Arabidopsis thaliana suggests functional diversification of chromatin modification among multicellular eukaryotes.</title>
        <authorList>
            <person name="Pandey R."/>
            <person name="Mueller A."/>
            <person name="Napoli C.A."/>
            <person name="Selinger D.A."/>
            <person name="Pikaard C.S."/>
            <person name="Richards E.J."/>
            <person name="Bender J."/>
            <person name="Mount D.W."/>
            <person name="Jorgensen R.A."/>
        </authorList>
    </citation>
    <scope>GENE FAMILY</scope>
    <scope>NOMENCLATURE</scope>
</reference>
<gene>
    <name type="primary">GTE1</name>
    <name type="synonym">IMB1</name>
    <name type="ordered locus">At2g34900</name>
    <name type="ORF">F19I3.13</name>
</gene>
<feature type="chain" id="PRO_0000406334" description="Transcription factor GTE1">
    <location>
        <begin position="1"/>
        <end position="386"/>
    </location>
</feature>
<feature type="domain" description="Bromo" evidence="1">
    <location>
        <begin position="105"/>
        <end position="211"/>
    </location>
</feature>
<feature type="domain" description="NET" evidence="2">
    <location>
        <begin position="263"/>
        <end position="344"/>
    </location>
</feature>
<feature type="region of interest" description="Disordered" evidence="3">
    <location>
        <begin position="66"/>
        <end position="106"/>
    </location>
</feature>
<feature type="region of interest" description="Disordered" evidence="3">
    <location>
        <begin position="340"/>
        <end position="386"/>
    </location>
</feature>
<feature type="compositionally biased region" description="Polar residues" evidence="3">
    <location>
        <begin position="68"/>
        <end position="78"/>
    </location>
</feature>
<feature type="compositionally biased region" description="Low complexity" evidence="3">
    <location>
        <begin position="345"/>
        <end position="358"/>
    </location>
</feature>
<feature type="sequence conflict" description="In Ref. 4; BAD95432." evidence="5" ref="4">
    <original>N</original>
    <variation>S</variation>
    <location>
        <position position="76"/>
    </location>
</feature>
<feature type="sequence conflict" description="In Ref. 4; BAD95432." evidence="5" ref="4">
    <original>E</original>
    <variation>G</variation>
    <location>
        <position position="315"/>
    </location>
</feature>
<keyword id="KW-0010">Activator</keyword>
<keyword id="KW-0025">Alternative splicing</keyword>
<keyword id="KW-0103">Bromodomain</keyword>
<keyword id="KW-0539">Nucleus</keyword>
<keyword id="KW-1185">Reference proteome</keyword>
<keyword id="KW-0804">Transcription</keyword>
<keyword id="KW-0805">Transcription regulation</keyword>
<sequence length="386" mass="43442">MSVHVKEEPVLVPNCDVENTELAVFNGNGESELENFGTCVDEITDRVNQLEQKVVEVEHFYSTKDGAAQTNTSKSNSGGKKIAISQPNNSKGNSAGKEKSKGKHVSSPDLMRQFATMFRQIAQHKWAWPFLEPVDVKGLGLHDYYKVIEKPMDLGTIKKKMESSEYSNVREIYADVRLVFKNAMRYNEEKEDVYVMAESLLEKFEEKWLLIMPKLVEEEKKQVDEEAEKHANKQLTMEAAQAEMARDLSNELYEIDLQLEKLRESVVQRCRKLSTQEKKGLSAALGRLSPEDLSKALKMVSESNPSFPAGAPEVELDIDVQTDVTLWRLKVFVQEALKAANKSSGGTNAQNNNNTGTGEINKNNAKRRREISDAINKASIKRAKKA</sequence>
<organism>
    <name type="scientific">Arabidopsis thaliana</name>
    <name type="common">Mouse-ear cress</name>
    <dbReference type="NCBI Taxonomy" id="3702"/>
    <lineage>
        <taxon>Eukaryota</taxon>
        <taxon>Viridiplantae</taxon>
        <taxon>Streptophyta</taxon>
        <taxon>Embryophyta</taxon>
        <taxon>Tracheophyta</taxon>
        <taxon>Spermatophyta</taxon>
        <taxon>Magnoliopsida</taxon>
        <taxon>eudicotyledons</taxon>
        <taxon>Gunneridae</taxon>
        <taxon>Pentapetalae</taxon>
        <taxon>rosids</taxon>
        <taxon>malvids</taxon>
        <taxon>Brassicales</taxon>
        <taxon>Brassicaceae</taxon>
        <taxon>Camelineae</taxon>
        <taxon>Arabidopsis</taxon>
    </lineage>
</organism>
<dbReference type="EMBL" id="AY180100">
    <property type="protein sequence ID" value="AAO22056.1"/>
    <property type="molecule type" value="mRNA"/>
</dbReference>
<dbReference type="EMBL" id="AC004238">
    <property type="protein sequence ID" value="AAC12830.1"/>
    <property type="status" value="ALT_SEQ"/>
    <property type="molecule type" value="Genomic_DNA"/>
</dbReference>
<dbReference type="EMBL" id="CP002685">
    <property type="protein sequence ID" value="AEC09037.1"/>
    <property type="molecule type" value="Genomic_DNA"/>
</dbReference>
<dbReference type="EMBL" id="AK222242">
    <property type="protein sequence ID" value="BAD95432.1"/>
    <property type="molecule type" value="mRNA"/>
</dbReference>
<dbReference type="EMBL" id="AK230434">
    <property type="protein sequence ID" value="BAF02232.1"/>
    <property type="molecule type" value="mRNA"/>
</dbReference>
<dbReference type="EMBL" id="BT026469">
    <property type="protein sequence ID" value="ABH04576.1"/>
    <property type="molecule type" value="mRNA"/>
</dbReference>
<dbReference type="PIR" id="T00472">
    <property type="entry name" value="T00472"/>
</dbReference>
<dbReference type="RefSeq" id="NP_181036.2">
    <molecule id="Q84XV2-1"/>
    <property type="nucleotide sequence ID" value="NM_129043.5"/>
</dbReference>
<dbReference type="SMR" id="Q84XV2"/>
<dbReference type="BioGRID" id="3401">
    <property type="interactions" value="2"/>
</dbReference>
<dbReference type="FunCoup" id="Q84XV2">
    <property type="interactions" value="1578"/>
</dbReference>
<dbReference type="IntAct" id="Q84XV2">
    <property type="interactions" value="1"/>
</dbReference>
<dbReference type="STRING" id="3702.Q84XV2"/>
<dbReference type="iPTMnet" id="Q84XV2"/>
<dbReference type="PaxDb" id="3702-AT2G34900.1"/>
<dbReference type="ProteomicsDB" id="247197">
    <molecule id="Q84XV2-1"/>
</dbReference>
<dbReference type="EnsemblPlants" id="AT2G34900.1">
    <molecule id="Q84XV2-1"/>
    <property type="protein sequence ID" value="AT2G34900.1"/>
    <property type="gene ID" value="AT2G34900"/>
</dbReference>
<dbReference type="GeneID" id="818055"/>
<dbReference type="Gramene" id="AT2G34900.1">
    <molecule id="Q84XV2-1"/>
    <property type="protein sequence ID" value="AT2G34900.1"/>
    <property type="gene ID" value="AT2G34900"/>
</dbReference>
<dbReference type="KEGG" id="ath:AT2G34900"/>
<dbReference type="Araport" id="AT2G34900"/>
<dbReference type="TAIR" id="AT2G34900">
    <property type="gene designation" value="IMB1"/>
</dbReference>
<dbReference type="eggNOG" id="KOG1474">
    <property type="taxonomic scope" value="Eukaryota"/>
</dbReference>
<dbReference type="InParanoid" id="Q84XV2"/>
<dbReference type="OMA" id="IGGNENQ"/>
<dbReference type="OrthoDB" id="21449at2759"/>
<dbReference type="PhylomeDB" id="Q84XV2"/>
<dbReference type="PRO" id="PR:Q84XV2"/>
<dbReference type="Proteomes" id="UP000006548">
    <property type="component" value="Chromosome 2"/>
</dbReference>
<dbReference type="ExpressionAtlas" id="Q84XV2">
    <property type="expression patterns" value="baseline and differential"/>
</dbReference>
<dbReference type="GO" id="GO:0005634">
    <property type="term" value="C:nucleus"/>
    <property type="evidence" value="ECO:0000314"/>
    <property type="project" value="TAIR"/>
</dbReference>
<dbReference type="GO" id="GO:0045893">
    <property type="term" value="P:positive regulation of DNA-templated transcription"/>
    <property type="evidence" value="ECO:0000315"/>
    <property type="project" value="UniProtKB"/>
</dbReference>
<dbReference type="GO" id="GO:0010030">
    <property type="term" value="P:positive regulation of seed germination"/>
    <property type="evidence" value="ECO:0000315"/>
    <property type="project" value="TAIR"/>
</dbReference>
<dbReference type="CDD" id="cd05506">
    <property type="entry name" value="Bromo_plant1"/>
    <property type="match status" value="1"/>
</dbReference>
<dbReference type="Gene3D" id="1.20.1270.220">
    <property type="match status" value="1"/>
</dbReference>
<dbReference type="Gene3D" id="1.20.920.10">
    <property type="entry name" value="Bromodomain-like"/>
    <property type="match status" value="1"/>
</dbReference>
<dbReference type="InterPro" id="IPR001487">
    <property type="entry name" value="Bromodomain"/>
</dbReference>
<dbReference type="InterPro" id="IPR036427">
    <property type="entry name" value="Bromodomain-like_sf"/>
</dbReference>
<dbReference type="InterPro" id="IPR018359">
    <property type="entry name" value="Bromodomain_CS"/>
</dbReference>
<dbReference type="InterPro" id="IPR017413">
    <property type="entry name" value="GTE1"/>
</dbReference>
<dbReference type="InterPro" id="IPR037377">
    <property type="entry name" value="GTE_bromo"/>
</dbReference>
<dbReference type="InterPro" id="IPR027353">
    <property type="entry name" value="NET_dom"/>
</dbReference>
<dbReference type="InterPro" id="IPR038336">
    <property type="entry name" value="NET_sf"/>
</dbReference>
<dbReference type="PANTHER" id="PTHR45926">
    <property type="entry name" value="OSJNBA0053K19.4 PROTEIN"/>
    <property type="match status" value="1"/>
</dbReference>
<dbReference type="Pfam" id="PF17035">
    <property type="entry name" value="BET"/>
    <property type="match status" value="1"/>
</dbReference>
<dbReference type="Pfam" id="PF00439">
    <property type="entry name" value="Bromodomain"/>
    <property type="match status" value="1"/>
</dbReference>
<dbReference type="PIRSF" id="PIRSF038154">
    <property type="entry name" value="Transcription_factor_GTE6"/>
    <property type="match status" value="1"/>
</dbReference>
<dbReference type="PRINTS" id="PR00503">
    <property type="entry name" value="BROMODOMAIN"/>
</dbReference>
<dbReference type="SMART" id="SM00297">
    <property type="entry name" value="BROMO"/>
    <property type="match status" value="1"/>
</dbReference>
<dbReference type="SUPFAM" id="SSF47370">
    <property type="entry name" value="Bromodomain"/>
    <property type="match status" value="1"/>
</dbReference>
<dbReference type="PROSITE" id="PS00633">
    <property type="entry name" value="BROMODOMAIN_1"/>
    <property type="match status" value="1"/>
</dbReference>
<dbReference type="PROSITE" id="PS50014">
    <property type="entry name" value="BROMODOMAIN_2"/>
    <property type="match status" value="1"/>
</dbReference>
<dbReference type="PROSITE" id="PS51525">
    <property type="entry name" value="NET"/>
    <property type="match status" value="1"/>
</dbReference>
<protein>
    <recommendedName>
        <fullName>Transcription factor GTE1</fullName>
    </recommendedName>
    <alternativeName>
        <fullName>Bromodomain-containing protein GTE1</fullName>
    </alternativeName>
    <alternativeName>
        <fullName>Protein GLOBAL TRANSCRIPTION FACTOR GROUP E1</fullName>
    </alternativeName>
    <alternativeName>
        <fullName>Protein IMBIBITION-INDUCIBLE 1</fullName>
    </alternativeName>
</protein>
<comment type="function">
    <text evidence="4">Transcription activator that plays a role in the promotion of seed germination by both negatively and positively regulating the abscisic acid (ABA) and phytochrome A (phyA) transduction pathways, respectively.</text>
</comment>
<comment type="interaction">
    <interactant intactId="EBI-25515825">
        <id>Q84XV2</id>
    </interactant>
    <interactant intactId="EBI-541400">
        <id>Q93ZE2</id>
        <label>TGA7</label>
    </interactant>
    <organismsDiffer>false</organismsDiffer>
    <experiments>3</experiments>
</comment>
<comment type="subcellular location">
    <subcellularLocation>
        <location evidence="4">Nucleus</location>
    </subcellularLocation>
</comment>
<comment type="alternative products">
    <event type="alternative splicing"/>
    <isoform>
        <id>Q84XV2-1</id>
        <name>1</name>
        <sequence type="displayed"/>
    </isoform>
    <text>A number of isoforms are produced. According to EST sequences.</text>
</comment>
<comment type="tissue specificity">
    <text evidence="4">Barely detectable in stems, leaves, siliques, and dry seeds, but was present at considerable levels in roots, flowers and imbibited seeds.</text>
</comment>
<comment type="developmental stage">
    <text evidence="4">Down-regulated during germination.</text>
</comment>
<comment type="induction">
    <text evidence="4">During seed imbibition.</text>
</comment>
<comment type="domain">
    <text evidence="4">The NET domain could serve as an interface to localize different proteins or complexes to chromatin.</text>
</comment>
<comment type="disruption phenotype">
    <text evidence="4">Impaired cotyledon greening during germination. Seeds are deficient in the phytochrome A (phyA)-mediated very-low-fluence response of germination. Mature plants appear normal.</text>
</comment>
<comment type="sequence caution" evidence="5">
    <conflict type="erroneous gene model prediction">
        <sequence resource="EMBL-CDS" id="AAC12830"/>
    </conflict>
</comment>
<evidence type="ECO:0000255" key="1">
    <source>
        <dbReference type="PROSITE-ProRule" id="PRU00035"/>
    </source>
</evidence>
<evidence type="ECO:0000255" key="2">
    <source>
        <dbReference type="PROSITE-ProRule" id="PRU00857"/>
    </source>
</evidence>
<evidence type="ECO:0000256" key="3">
    <source>
        <dbReference type="SAM" id="MobiDB-lite"/>
    </source>
</evidence>
<evidence type="ECO:0000269" key="4">
    <source>
    </source>
</evidence>
<evidence type="ECO:0000305" key="5"/>
<proteinExistence type="evidence at protein level"/>
<accession>Q84XV2</accession>
<accession>O64754</accession>
<accession>Q56W05</accession>